<comment type="function">
    <text evidence="1">Catalyzes the conversion of L-arabinose to L-ribulose.</text>
</comment>
<comment type="catalytic activity">
    <reaction evidence="1">
        <text>beta-L-arabinopyranose = L-ribulose</text>
        <dbReference type="Rhea" id="RHEA:14821"/>
        <dbReference type="ChEBI" id="CHEBI:16880"/>
        <dbReference type="ChEBI" id="CHEBI:40886"/>
        <dbReference type="EC" id="5.3.1.4"/>
    </reaction>
</comment>
<comment type="cofactor">
    <cofactor evidence="1">
        <name>Mn(2+)</name>
        <dbReference type="ChEBI" id="CHEBI:29035"/>
    </cofactor>
    <text evidence="1">Binds 1 Mn(2+) ion per subunit.</text>
</comment>
<comment type="pathway">
    <text evidence="1">Carbohydrate degradation; L-arabinose degradation via L-ribulose; D-xylulose 5-phosphate from L-arabinose (bacterial route): step 1/3.</text>
</comment>
<comment type="subunit">
    <text evidence="1">Homohexamer.</text>
</comment>
<comment type="similarity">
    <text evidence="1">Belongs to the arabinose isomerase family.</text>
</comment>
<evidence type="ECO:0000255" key="1">
    <source>
        <dbReference type="HAMAP-Rule" id="MF_00519"/>
    </source>
</evidence>
<protein>
    <recommendedName>
        <fullName evidence="1">L-arabinose isomerase</fullName>
        <ecNumber evidence="1">5.3.1.4</ecNumber>
    </recommendedName>
</protein>
<gene>
    <name evidence="1" type="primary">araA</name>
    <name type="ordered locus">KPK_4681</name>
</gene>
<organism>
    <name type="scientific">Klebsiella pneumoniae (strain 342)</name>
    <dbReference type="NCBI Taxonomy" id="507522"/>
    <lineage>
        <taxon>Bacteria</taxon>
        <taxon>Pseudomonadati</taxon>
        <taxon>Pseudomonadota</taxon>
        <taxon>Gammaproteobacteria</taxon>
        <taxon>Enterobacterales</taxon>
        <taxon>Enterobacteriaceae</taxon>
        <taxon>Klebsiella/Raoultella group</taxon>
        <taxon>Klebsiella</taxon>
        <taxon>Klebsiella pneumoniae complex</taxon>
    </lineage>
</organism>
<name>ARAA_KLEP3</name>
<feature type="chain" id="PRO_1000127609" description="L-arabinose isomerase">
    <location>
        <begin position="1"/>
        <end position="500"/>
    </location>
</feature>
<feature type="binding site" evidence="1">
    <location>
        <position position="306"/>
    </location>
    <ligand>
        <name>Mn(2+)</name>
        <dbReference type="ChEBI" id="CHEBI:29035"/>
    </ligand>
</feature>
<feature type="binding site" evidence="1">
    <location>
        <position position="333"/>
    </location>
    <ligand>
        <name>Mn(2+)</name>
        <dbReference type="ChEBI" id="CHEBI:29035"/>
    </ligand>
</feature>
<feature type="binding site" evidence="1">
    <location>
        <position position="350"/>
    </location>
    <ligand>
        <name>Mn(2+)</name>
        <dbReference type="ChEBI" id="CHEBI:29035"/>
    </ligand>
</feature>
<feature type="binding site" evidence="1">
    <location>
        <position position="450"/>
    </location>
    <ligand>
        <name>Mn(2+)</name>
        <dbReference type="ChEBI" id="CHEBI:29035"/>
    </ligand>
</feature>
<accession>B5Y1Y1</accession>
<sequence>MTIFDNYEVWFVIGSQHLYGPEALRQVTKHAEHVVNSLNAEAKLPCKLVLKPLGTTPDEITHICRDANYDDKCAGLVVWLHTFSPAKMWINGLTILNKPLLQFHTQYNAALPWDSIDMDFMNLNQTAHGGREFGFIGARMRQQHSVVTGHWQDKEAHQRIGGWMRQAVSKQDTRHLKVCRFGDNMREVAVTDGDKVAAQIKFGFSVNTWAVGDLVQVVNSISDGDISALVDEYESSYRLTPAAQVHGEKRQNVLDAARIELGMKRFLEQGGFHAFTTTFEDLHGLKQLPGLAVQRLMQQGYGFAGEGDWKTAALLRIMKVMSTGLQGGTSFMEDYTYHFDNGNDLVLGSHMLEVCPTIATAEKPILDVQPLGIGGKADPARLIFNTQTGPAIVASLIDLGDRFRLLVNTIETVPTPHDLPKLPVANALWKAQPDLRTASEAWIIAGGAHHTVFSHALNLDDMRQFAELHNIELTVIDNDTRLPSFKDALRWNEVYYSSKR</sequence>
<proteinExistence type="inferred from homology"/>
<keyword id="KW-0054">Arabinose catabolism</keyword>
<keyword id="KW-0119">Carbohydrate metabolism</keyword>
<keyword id="KW-0413">Isomerase</keyword>
<keyword id="KW-0464">Manganese</keyword>
<keyword id="KW-0479">Metal-binding</keyword>
<reference key="1">
    <citation type="journal article" date="2008" name="PLoS Genet.">
        <title>Complete genome sequence of the N2-fixing broad host range endophyte Klebsiella pneumoniae 342 and virulence predictions verified in mice.</title>
        <authorList>
            <person name="Fouts D.E."/>
            <person name="Tyler H.L."/>
            <person name="DeBoy R.T."/>
            <person name="Daugherty S."/>
            <person name="Ren Q."/>
            <person name="Badger J.H."/>
            <person name="Durkin A.S."/>
            <person name="Huot H."/>
            <person name="Shrivastava S."/>
            <person name="Kothari S."/>
            <person name="Dodson R.J."/>
            <person name="Mohamoud Y."/>
            <person name="Khouri H."/>
            <person name="Roesch L.F.W."/>
            <person name="Krogfelt K.A."/>
            <person name="Struve C."/>
            <person name="Triplett E.W."/>
            <person name="Methe B.A."/>
        </authorList>
    </citation>
    <scope>NUCLEOTIDE SEQUENCE [LARGE SCALE GENOMIC DNA]</scope>
    <source>
        <strain>342</strain>
    </source>
</reference>
<dbReference type="EC" id="5.3.1.4" evidence="1"/>
<dbReference type="EMBL" id="CP000964">
    <property type="protein sequence ID" value="ACI09464.1"/>
    <property type="molecule type" value="Genomic_DNA"/>
</dbReference>
<dbReference type="SMR" id="B5Y1Y1"/>
<dbReference type="KEGG" id="kpe:KPK_4681"/>
<dbReference type="HOGENOM" id="CLU_045663_0_0_6"/>
<dbReference type="UniPathway" id="UPA00145">
    <property type="reaction ID" value="UER00565"/>
</dbReference>
<dbReference type="Proteomes" id="UP000001734">
    <property type="component" value="Chromosome"/>
</dbReference>
<dbReference type="GO" id="GO:0005829">
    <property type="term" value="C:cytosol"/>
    <property type="evidence" value="ECO:0007669"/>
    <property type="project" value="TreeGrafter"/>
</dbReference>
<dbReference type="GO" id="GO:0008733">
    <property type="term" value="F:L-arabinose isomerase activity"/>
    <property type="evidence" value="ECO:0007669"/>
    <property type="project" value="UniProtKB-UniRule"/>
</dbReference>
<dbReference type="GO" id="GO:0030145">
    <property type="term" value="F:manganese ion binding"/>
    <property type="evidence" value="ECO:0007669"/>
    <property type="project" value="UniProtKB-UniRule"/>
</dbReference>
<dbReference type="GO" id="GO:0019569">
    <property type="term" value="P:L-arabinose catabolic process to xylulose 5-phosphate"/>
    <property type="evidence" value="ECO:0007669"/>
    <property type="project" value="UniProtKB-UniRule"/>
</dbReference>
<dbReference type="CDD" id="cd03557">
    <property type="entry name" value="L-arabinose_isomerase"/>
    <property type="match status" value="1"/>
</dbReference>
<dbReference type="FunFam" id="3.40.50.10940:FF:000001">
    <property type="entry name" value="L-arabinose isomerase"/>
    <property type="match status" value="1"/>
</dbReference>
<dbReference type="Gene3D" id="3.40.50.10940">
    <property type="match status" value="1"/>
</dbReference>
<dbReference type="HAMAP" id="MF_00519">
    <property type="entry name" value="Arabinose_Isome"/>
    <property type="match status" value="1"/>
</dbReference>
<dbReference type="InterPro" id="IPR024664">
    <property type="entry name" value="Ara_Isoase_C"/>
</dbReference>
<dbReference type="InterPro" id="IPR055390">
    <property type="entry name" value="AraA_central"/>
</dbReference>
<dbReference type="InterPro" id="IPR055389">
    <property type="entry name" value="AraA_N"/>
</dbReference>
<dbReference type="InterPro" id="IPR038583">
    <property type="entry name" value="AraA_N_sf"/>
</dbReference>
<dbReference type="InterPro" id="IPR004216">
    <property type="entry name" value="Fuc/Ara_isomerase_C"/>
</dbReference>
<dbReference type="InterPro" id="IPR009015">
    <property type="entry name" value="Fucose_isomerase_N/cen_sf"/>
</dbReference>
<dbReference type="InterPro" id="IPR003762">
    <property type="entry name" value="Lara_isomerase"/>
</dbReference>
<dbReference type="NCBIfam" id="NF002795">
    <property type="entry name" value="PRK02929.1"/>
    <property type="match status" value="1"/>
</dbReference>
<dbReference type="PANTHER" id="PTHR38464">
    <property type="entry name" value="L-ARABINOSE ISOMERASE"/>
    <property type="match status" value="1"/>
</dbReference>
<dbReference type="PANTHER" id="PTHR38464:SF1">
    <property type="entry name" value="L-ARABINOSE ISOMERASE"/>
    <property type="match status" value="1"/>
</dbReference>
<dbReference type="Pfam" id="PF24856">
    <property type="entry name" value="AraA_central"/>
    <property type="match status" value="1"/>
</dbReference>
<dbReference type="Pfam" id="PF02610">
    <property type="entry name" value="AraA_N"/>
    <property type="match status" value="1"/>
</dbReference>
<dbReference type="Pfam" id="PF11762">
    <property type="entry name" value="Arabinose_Iso_C"/>
    <property type="match status" value="1"/>
</dbReference>
<dbReference type="PIRSF" id="PIRSF001478">
    <property type="entry name" value="L-ara_isomerase"/>
    <property type="match status" value="1"/>
</dbReference>
<dbReference type="SUPFAM" id="SSF50443">
    <property type="entry name" value="FucI/AraA C-terminal domain-like"/>
    <property type="match status" value="1"/>
</dbReference>
<dbReference type="SUPFAM" id="SSF53743">
    <property type="entry name" value="FucI/AraA N-terminal and middle domains"/>
    <property type="match status" value="1"/>
</dbReference>